<keyword id="KW-0378">Hydrolase</keyword>
<keyword id="KW-0546">Nucleotide metabolism</keyword>
<keyword id="KW-0547">Nucleotide-binding</keyword>
<evidence type="ECO:0000255" key="1">
    <source>
        <dbReference type="HAMAP-Rule" id="MF_00146"/>
    </source>
</evidence>
<organism>
    <name type="scientific">Burkholderia cenocepacia (strain ATCC BAA-245 / DSM 16553 / LMG 16656 / NCTC 13227 / J2315 / CF5610)</name>
    <name type="common">Burkholderia cepacia (strain J2315)</name>
    <dbReference type="NCBI Taxonomy" id="216591"/>
    <lineage>
        <taxon>Bacteria</taxon>
        <taxon>Pseudomonadati</taxon>
        <taxon>Pseudomonadota</taxon>
        <taxon>Betaproteobacteria</taxon>
        <taxon>Burkholderiales</taxon>
        <taxon>Burkholderiaceae</taxon>
        <taxon>Burkholderia</taxon>
        <taxon>Burkholderia cepacia complex</taxon>
    </lineage>
</organism>
<accession>B4E8D6</accession>
<feature type="chain" id="PRO_1000096410" description="dCTP deaminase">
    <location>
        <begin position="1"/>
        <end position="189"/>
    </location>
</feature>
<feature type="active site" description="Proton donor/acceptor" evidence="1">
    <location>
        <position position="138"/>
    </location>
</feature>
<feature type="binding site" evidence="1">
    <location>
        <begin position="112"/>
        <end position="117"/>
    </location>
    <ligand>
        <name>dCTP</name>
        <dbReference type="ChEBI" id="CHEBI:61481"/>
    </ligand>
</feature>
<feature type="binding site" evidence="1">
    <location>
        <begin position="136"/>
        <end position="138"/>
    </location>
    <ligand>
        <name>dCTP</name>
        <dbReference type="ChEBI" id="CHEBI:61481"/>
    </ligand>
</feature>
<feature type="binding site" evidence="1">
    <location>
        <position position="157"/>
    </location>
    <ligand>
        <name>dCTP</name>
        <dbReference type="ChEBI" id="CHEBI:61481"/>
    </ligand>
</feature>
<feature type="binding site" evidence="1">
    <location>
        <position position="171"/>
    </location>
    <ligand>
        <name>dCTP</name>
        <dbReference type="ChEBI" id="CHEBI:61481"/>
    </ligand>
</feature>
<feature type="binding site" evidence="1">
    <location>
        <position position="181"/>
    </location>
    <ligand>
        <name>dCTP</name>
        <dbReference type="ChEBI" id="CHEBI:61481"/>
    </ligand>
</feature>
<sequence length="189" mass="21356">MSIKSDKWIRRMAEEHKMIEPFVPDQVRASEDGRRIVSYGTSSYGYDIRCADEFKIFTNINSTIVDPKNFDEGSFVDFKGDVCIIPPNSFALARTVEYFRIPRTVLTVCLGKSTYARCGIIVNVTPFEPEWEGYVTLEFSNTTPLPAKIYANEGVAQVLFFESDEVCDVSYADRGGKYQGQRGVTLPKT</sequence>
<dbReference type="EC" id="3.5.4.13" evidence="1"/>
<dbReference type="EMBL" id="AM747720">
    <property type="protein sequence ID" value="CAR52944.1"/>
    <property type="molecule type" value="Genomic_DNA"/>
</dbReference>
<dbReference type="RefSeq" id="WP_006398615.1">
    <property type="nucleotide sequence ID" value="NC_011000.1"/>
</dbReference>
<dbReference type="SMR" id="B4E8D6"/>
<dbReference type="GeneID" id="98107731"/>
<dbReference type="KEGG" id="bcj:BCAL2642"/>
<dbReference type="eggNOG" id="COG0717">
    <property type="taxonomic scope" value="Bacteria"/>
</dbReference>
<dbReference type="HOGENOM" id="CLU_087476_4_0_4"/>
<dbReference type="BioCyc" id="BCEN216591:G1G1V-2929-MONOMER"/>
<dbReference type="UniPathway" id="UPA00610">
    <property type="reaction ID" value="UER00665"/>
</dbReference>
<dbReference type="Proteomes" id="UP000001035">
    <property type="component" value="Chromosome 1"/>
</dbReference>
<dbReference type="GO" id="GO:0008829">
    <property type="term" value="F:dCTP deaminase activity"/>
    <property type="evidence" value="ECO:0007669"/>
    <property type="project" value="UniProtKB-UniRule"/>
</dbReference>
<dbReference type="GO" id="GO:0000166">
    <property type="term" value="F:nucleotide binding"/>
    <property type="evidence" value="ECO:0007669"/>
    <property type="project" value="UniProtKB-KW"/>
</dbReference>
<dbReference type="GO" id="GO:0006226">
    <property type="term" value="P:dUMP biosynthetic process"/>
    <property type="evidence" value="ECO:0007669"/>
    <property type="project" value="UniProtKB-UniPathway"/>
</dbReference>
<dbReference type="GO" id="GO:0006229">
    <property type="term" value="P:dUTP biosynthetic process"/>
    <property type="evidence" value="ECO:0007669"/>
    <property type="project" value="UniProtKB-UniRule"/>
</dbReference>
<dbReference type="GO" id="GO:0015949">
    <property type="term" value="P:nucleobase-containing small molecule interconversion"/>
    <property type="evidence" value="ECO:0007669"/>
    <property type="project" value="TreeGrafter"/>
</dbReference>
<dbReference type="CDD" id="cd07557">
    <property type="entry name" value="trimeric_dUTPase"/>
    <property type="match status" value="1"/>
</dbReference>
<dbReference type="FunFam" id="2.70.40.10:FF:000001">
    <property type="entry name" value="dCTP deaminase"/>
    <property type="match status" value="1"/>
</dbReference>
<dbReference type="Gene3D" id="2.70.40.10">
    <property type="match status" value="1"/>
</dbReference>
<dbReference type="HAMAP" id="MF_00146">
    <property type="entry name" value="dCTP_deaminase"/>
    <property type="match status" value="1"/>
</dbReference>
<dbReference type="InterPro" id="IPR011962">
    <property type="entry name" value="dCTP_deaminase"/>
</dbReference>
<dbReference type="InterPro" id="IPR036157">
    <property type="entry name" value="dUTPase-like_sf"/>
</dbReference>
<dbReference type="InterPro" id="IPR033704">
    <property type="entry name" value="dUTPase_trimeric"/>
</dbReference>
<dbReference type="NCBIfam" id="TIGR02274">
    <property type="entry name" value="dCTP_deam"/>
    <property type="match status" value="1"/>
</dbReference>
<dbReference type="PANTHER" id="PTHR42680">
    <property type="entry name" value="DCTP DEAMINASE"/>
    <property type="match status" value="1"/>
</dbReference>
<dbReference type="PANTHER" id="PTHR42680:SF3">
    <property type="entry name" value="DCTP DEAMINASE"/>
    <property type="match status" value="1"/>
</dbReference>
<dbReference type="Pfam" id="PF22769">
    <property type="entry name" value="DCD"/>
    <property type="match status" value="1"/>
</dbReference>
<dbReference type="SUPFAM" id="SSF51283">
    <property type="entry name" value="dUTPase-like"/>
    <property type="match status" value="1"/>
</dbReference>
<gene>
    <name evidence="1" type="primary">dcd</name>
    <name type="ordered locus">BceJ2315_25820</name>
    <name type="ORF">BCAL2642</name>
</gene>
<name>DCD_BURCJ</name>
<proteinExistence type="inferred from homology"/>
<protein>
    <recommendedName>
        <fullName evidence="1">dCTP deaminase</fullName>
        <ecNumber evidence="1">3.5.4.13</ecNumber>
    </recommendedName>
    <alternativeName>
        <fullName evidence="1">Deoxycytidine triphosphate deaminase</fullName>
    </alternativeName>
</protein>
<comment type="function">
    <text evidence="1">Catalyzes the deamination of dCTP to dUTP.</text>
</comment>
<comment type="catalytic activity">
    <reaction evidence="1">
        <text>dCTP + H2O + H(+) = dUTP + NH4(+)</text>
        <dbReference type="Rhea" id="RHEA:22680"/>
        <dbReference type="ChEBI" id="CHEBI:15377"/>
        <dbReference type="ChEBI" id="CHEBI:15378"/>
        <dbReference type="ChEBI" id="CHEBI:28938"/>
        <dbReference type="ChEBI" id="CHEBI:61481"/>
        <dbReference type="ChEBI" id="CHEBI:61555"/>
        <dbReference type="EC" id="3.5.4.13"/>
    </reaction>
</comment>
<comment type="pathway">
    <text evidence="1">Pyrimidine metabolism; dUMP biosynthesis; dUMP from dCTP (dUTP route): step 1/2.</text>
</comment>
<comment type="subunit">
    <text evidence="1">Homotrimer.</text>
</comment>
<comment type="similarity">
    <text evidence="1">Belongs to the dCTP deaminase family.</text>
</comment>
<reference key="1">
    <citation type="journal article" date="2009" name="J. Bacteriol.">
        <title>The genome of Burkholderia cenocepacia J2315, an epidemic pathogen of cystic fibrosis patients.</title>
        <authorList>
            <person name="Holden M.T."/>
            <person name="Seth-Smith H.M."/>
            <person name="Crossman L.C."/>
            <person name="Sebaihia M."/>
            <person name="Bentley S.D."/>
            <person name="Cerdeno-Tarraga A.M."/>
            <person name="Thomson N.R."/>
            <person name="Bason N."/>
            <person name="Quail M.A."/>
            <person name="Sharp S."/>
            <person name="Cherevach I."/>
            <person name="Churcher C."/>
            <person name="Goodhead I."/>
            <person name="Hauser H."/>
            <person name="Holroyd N."/>
            <person name="Mungall K."/>
            <person name="Scott P."/>
            <person name="Walker D."/>
            <person name="White B."/>
            <person name="Rose H."/>
            <person name="Iversen P."/>
            <person name="Mil-Homens D."/>
            <person name="Rocha E.P."/>
            <person name="Fialho A.M."/>
            <person name="Baldwin A."/>
            <person name="Dowson C."/>
            <person name="Barrell B.G."/>
            <person name="Govan J.R."/>
            <person name="Vandamme P."/>
            <person name="Hart C.A."/>
            <person name="Mahenthiralingam E."/>
            <person name="Parkhill J."/>
        </authorList>
    </citation>
    <scope>NUCLEOTIDE SEQUENCE [LARGE SCALE GENOMIC DNA]</scope>
    <source>
        <strain>ATCC BAA-245 / DSM 16553 / LMG 16656 / NCTC 13227 / J2315 / CF5610</strain>
    </source>
</reference>